<evidence type="ECO:0000255" key="1">
    <source>
        <dbReference type="HAMAP-Rule" id="MF_00735"/>
    </source>
</evidence>
<keyword id="KW-0963">Cytoplasm</keyword>
<keyword id="KW-0489">Methyltransferase</keyword>
<keyword id="KW-0949">S-adenosyl-L-methionine</keyword>
<keyword id="KW-0808">Transferase</keyword>
<protein>
    <recommendedName>
        <fullName evidence="1">Ribosomal protein L11 methyltransferase</fullName>
        <shortName evidence="1">L11 Mtase</shortName>
        <ecNumber evidence="1">2.1.1.-</ecNumber>
    </recommendedName>
</protein>
<name>PRMA_JANMA</name>
<proteinExistence type="inferred from homology"/>
<dbReference type="EC" id="2.1.1.-" evidence="1"/>
<dbReference type="EMBL" id="CP000269">
    <property type="protein sequence ID" value="ABR88924.1"/>
    <property type="molecule type" value="Genomic_DNA"/>
</dbReference>
<dbReference type="RefSeq" id="WP_012080822.1">
    <property type="nucleotide sequence ID" value="NC_009659.1"/>
</dbReference>
<dbReference type="SMR" id="A6T2B6"/>
<dbReference type="STRING" id="375286.mma_2973"/>
<dbReference type="KEGG" id="mms:mma_2973"/>
<dbReference type="eggNOG" id="COG2264">
    <property type="taxonomic scope" value="Bacteria"/>
</dbReference>
<dbReference type="HOGENOM" id="CLU_049382_4_1_4"/>
<dbReference type="OrthoDB" id="9785995at2"/>
<dbReference type="Proteomes" id="UP000006388">
    <property type="component" value="Chromosome"/>
</dbReference>
<dbReference type="GO" id="GO:0005829">
    <property type="term" value="C:cytosol"/>
    <property type="evidence" value="ECO:0007669"/>
    <property type="project" value="TreeGrafter"/>
</dbReference>
<dbReference type="GO" id="GO:0016279">
    <property type="term" value="F:protein-lysine N-methyltransferase activity"/>
    <property type="evidence" value="ECO:0007669"/>
    <property type="project" value="TreeGrafter"/>
</dbReference>
<dbReference type="GO" id="GO:0032259">
    <property type="term" value="P:methylation"/>
    <property type="evidence" value="ECO:0007669"/>
    <property type="project" value="UniProtKB-KW"/>
</dbReference>
<dbReference type="CDD" id="cd02440">
    <property type="entry name" value="AdoMet_MTases"/>
    <property type="match status" value="1"/>
</dbReference>
<dbReference type="Gene3D" id="3.40.50.150">
    <property type="entry name" value="Vaccinia Virus protein VP39"/>
    <property type="match status" value="1"/>
</dbReference>
<dbReference type="HAMAP" id="MF_00735">
    <property type="entry name" value="Methyltr_PrmA"/>
    <property type="match status" value="1"/>
</dbReference>
<dbReference type="InterPro" id="IPR050078">
    <property type="entry name" value="Ribosomal_L11_MeTrfase_PrmA"/>
</dbReference>
<dbReference type="InterPro" id="IPR004498">
    <property type="entry name" value="Ribosomal_PrmA_MeTrfase"/>
</dbReference>
<dbReference type="InterPro" id="IPR029063">
    <property type="entry name" value="SAM-dependent_MTases_sf"/>
</dbReference>
<dbReference type="NCBIfam" id="TIGR00406">
    <property type="entry name" value="prmA"/>
    <property type="match status" value="1"/>
</dbReference>
<dbReference type="PANTHER" id="PTHR43648">
    <property type="entry name" value="ELECTRON TRANSFER FLAVOPROTEIN BETA SUBUNIT LYSINE METHYLTRANSFERASE"/>
    <property type="match status" value="1"/>
</dbReference>
<dbReference type="PANTHER" id="PTHR43648:SF1">
    <property type="entry name" value="ELECTRON TRANSFER FLAVOPROTEIN BETA SUBUNIT LYSINE METHYLTRANSFERASE"/>
    <property type="match status" value="1"/>
</dbReference>
<dbReference type="Pfam" id="PF06325">
    <property type="entry name" value="PrmA"/>
    <property type="match status" value="1"/>
</dbReference>
<dbReference type="PIRSF" id="PIRSF000401">
    <property type="entry name" value="RPL11_MTase"/>
    <property type="match status" value="1"/>
</dbReference>
<dbReference type="SUPFAM" id="SSF53335">
    <property type="entry name" value="S-adenosyl-L-methionine-dependent methyltransferases"/>
    <property type="match status" value="1"/>
</dbReference>
<organism>
    <name type="scientific">Janthinobacterium sp. (strain Marseille)</name>
    <name type="common">Minibacterium massiliensis</name>
    <dbReference type="NCBI Taxonomy" id="375286"/>
    <lineage>
        <taxon>Bacteria</taxon>
        <taxon>Pseudomonadati</taxon>
        <taxon>Pseudomonadota</taxon>
        <taxon>Betaproteobacteria</taxon>
        <taxon>Burkholderiales</taxon>
        <taxon>Oxalobacteraceae</taxon>
        <taxon>Janthinobacterium</taxon>
    </lineage>
</organism>
<comment type="function">
    <text evidence="1">Methylates ribosomal protein L11.</text>
</comment>
<comment type="catalytic activity">
    <reaction evidence="1">
        <text>L-lysyl-[protein] + 3 S-adenosyl-L-methionine = N(6),N(6),N(6)-trimethyl-L-lysyl-[protein] + 3 S-adenosyl-L-homocysteine + 3 H(+)</text>
        <dbReference type="Rhea" id="RHEA:54192"/>
        <dbReference type="Rhea" id="RHEA-COMP:9752"/>
        <dbReference type="Rhea" id="RHEA-COMP:13826"/>
        <dbReference type="ChEBI" id="CHEBI:15378"/>
        <dbReference type="ChEBI" id="CHEBI:29969"/>
        <dbReference type="ChEBI" id="CHEBI:57856"/>
        <dbReference type="ChEBI" id="CHEBI:59789"/>
        <dbReference type="ChEBI" id="CHEBI:61961"/>
    </reaction>
</comment>
<comment type="subcellular location">
    <subcellularLocation>
        <location evidence="1">Cytoplasm</location>
    </subcellularLocation>
</comment>
<comment type="similarity">
    <text evidence="1">Belongs to the methyltransferase superfamily. PrmA family.</text>
</comment>
<feature type="chain" id="PRO_1000046034" description="Ribosomal protein L11 methyltransferase">
    <location>
        <begin position="1"/>
        <end position="310"/>
    </location>
</feature>
<feature type="binding site" evidence="1">
    <location>
        <position position="153"/>
    </location>
    <ligand>
        <name>S-adenosyl-L-methionine</name>
        <dbReference type="ChEBI" id="CHEBI:59789"/>
    </ligand>
</feature>
<feature type="binding site" evidence="1">
    <location>
        <position position="174"/>
    </location>
    <ligand>
        <name>S-adenosyl-L-methionine</name>
        <dbReference type="ChEBI" id="CHEBI:59789"/>
    </ligand>
</feature>
<feature type="binding site" evidence="1">
    <location>
        <position position="196"/>
    </location>
    <ligand>
        <name>S-adenosyl-L-methionine</name>
        <dbReference type="ChEBI" id="CHEBI:59789"/>
    </ligand>
</feature>
<feature type="binding site" evidence="1">
    <location>
        <position position="239"/>
    </location>
    <ligand>
        <name>S-adenosyl-L-methionine</name>
        <dbReference type="ChEBI" id="CHEBI:59789"/>
    </ligand>
</feature>
<reference key="1">
    <citation type="journal article" date="2007" name="PLoS Genet.">
        <title>Genome analysis of Minibacterium massiliensis highlights the convergent evolution of water-living bacteria.</title>
        <authorList>
            <person name="Audic S."/>
            <person name="Robert C."/>
            <person name="Campagna B."/>
            <person name="Parinello H."/>
            <person name="Claverie J.-M."/>
            <person name="Raoult D."/>
            <person name="Drancourt M."/>
        </authorList>
    </citation>
    <scope>NUCLEOTIDE SEQUENCE [LARGE SCALE GENOMIC DNA]</scope>
    <source>
        <strain>Marseille</strain>
    </source>
</reference>
<accession>A6T2B6</accession>
<sequence length="310" mass="32871">MSWTEIVIEVARTHAEALSDALMEAGALSVSVEDADFGTDAEQPLFGEPGMEPTEAAWEHSRVVALTPVEADQAAIVAEAAQAVGLAATDVAFTLRAVEEQDWVRLTQSQFEPIHIGKNIWVVPSWHDAPDPQALVLELDPGLAFGTGSHPTTRLCMEWLEAHPPVGLSVLDYGCGSGILAMVAAKLGSTDVIGIDIDPQAIKSALFNTERNHCEVAYYLPDEFASSGHAHTFDVVVANILANPLKVMAPMLSGRVKPGGKLILSGVLATQVEEVSAAYAPFIKLSVWAEHEGWVALAGQLPPGPESGQA</sequence>
<gene>
    <name evidence="1" type="primary">prmA</name>
    <name type="ordered locus">mma_2973</name>
</gene>